<name>COAA_BRASB</name>
<organism>
    <name type="scientific">Bradyrhizobium sp. (strain BTAi1 / ATCC BAA-1182)</name>
    <dbReference type="NCBI Taxonomy" id="288000"/>
    <lineage>
        <taxon>Bacteria</taxon>
        <taxon>Pseudomonadati</taxon>
        <taxon>Pseudomonadota</taxon>
        <taxon>Alphaproteobacteria</taxon>
        <taxon>Hyphomicrobiales</taxon>
        <taxon>Nitrobacteraceae</taxon>
        <taxon>Bradyrhizobium</taxon>
    </lineage>
</organism>
<accession>A5E8E3</accession>
<comment type="catalytic activity">
    <reaction evidence="1">
        <text>(R)-pantothenate + ATP = (R)-4'-phosphopantothenate + ADP + H(+)</text>
        <dbReference type="Rhea" id="RHEA:16373"/>
        <dbReference type="ChEBI" id="CHEBI:10986"/>
        <dbReference type="ChEBI" id="CHEBI:15378"/>
        <dbReference type="ChEBI" id="CHEBI:29032"/>
        <dbReference type="ChEBI" id="CHEBI:30616"/>
        <dbReference type="ChEBI" id="CHEBI:456216"/>
        <dbReference type="EC" id="2.7.1.33"/>
    </reaction>
</comment>
<comment type="pathway">
    <text evidence="1">Cofactor biosynthesis; coenzyme A biosynthesis; CoA from (R)-pantothenate: step 1/5.</text>
</comment>
<comment type="subcellular location">
    <subcellularLocation>
        <location evidence="1">Cytoplasm</location>
    </subcellularLocation>
</comment>
<comment type="similarity">
    <text evidence="1">Belongs to the prokaryotic pantothenate kinase family.</text>
</comment>
<protein>
    <recommendedName>
        <fullName evidence="1">Pantothenate kinase</fullName>
        <ecNumber evidence="1">2.7.1.33</ecNumber>
    </recommendedName>
    <alternativeName>
        <fullName evidence="1">Pantothenic acid kinase</fullName>
    </alternativeName>
</protein>
<reference key="1">
    <citation type="journal article" date="2007" name="Science">
        <title>Legumes symbioses: absence of nod genes in photosynthetic bradyrhizobia.</title>
        <authorList>
            <person name="Giraud E."/>
            <person name="Moulin L."/>
            <person name="Vallenet D."/>
            <person name="Barbe V."/>
            <person name="Cytryn E."/>
            <person name="Avarre J.-C."/>
            <person name="Jaubert M."/>
            <person name="Simon D."/>
            <person name="Cartieaux F."/>
            <person name="Prin Y."/>
            <person name="Bena G."/>
            <person name="Hannibal L."/>
            <person name="Fardoux J."/>
            <person name="Kojadinovic M."/>
            <person name="Vuillet L."/>
            <person name="Lajus A."/>
            <person name="Cruveiller S."/>
            <person name="Rouy Z."/>
            <person name="Mangenot S."/>
            <person name="Segurens B."/>
            <person name="Dossat C."/>
            <person name="Franck W.L."/>
            <person name="Chang W.-S."/>
            <person name="Saunders E."/>
            <person name="Bruce D."/>
            <person name="Richardson P."/>
            <person name="Normand P."/>
            <person name="Dreyfus B."/>
            <person name="Pignol D."/>
            <person name="Stacey G."/>
            <person name="Emerich D."/>
            <person name="Vermeglio A."/>
            <person name="Medigue C."/>
            <person name="Sadowsky M."/>
        </authorList>
    </citation>
    <scope>NUCLEOTIDE SEQUENCE [LARGE SCALE GENOMIC DNA]</scope>
    <source>
        <strain>BTAi1 / ATCC BAA-1182</strain>
    </source>
</reference>
<sequence length="318" mass="36679">MDMRTTEQQYNPYRVFTRQQWAELRNDTPMTLEPGEFSKLRSMHDRLDLKEVEDIYLPLSRLLSMYVDAAQRLYYAQRQFLGIRDRKMPYIIGVAGSVSVGKSTTARVLQALLARWSPRPKVDLITTDGFLYPNAVLERQGLMQKKGFPESYDLPRLLAFLSDIKAGRHTVRAPVYSHLTYDIVPNQWVEIDQPDILIVEGVNVLQTGPLPRDGKAVPVVSDFFDFSVYIDADEAVLRKWYVKRFLSLRDTAFHDPRSYFNRYALLSDEEAIATAIAIWERTNLANLEDNILPTRPRATLILKKGADHEVETVALRRL</sequence>
<evidence type="ECO:0000255" key="1">
    <source>
        <dbReference type="HAMAP-Rule" id="MF_00215"/>
    </source>
</evidence>
<feature type="chain" id="PRO_1000043211" description="Pantothenate kinase">
    <location>
        <begin position="1"/>
        <end position="318"/>
    </location>
</feature>
<feature type="binding site" evidence="1">
    <location>
        <begin position="96"/>
        <end position="103"/>
    </location>
    <ligand>
        <name>ATP</name>
        <dbReference type="ChEBI" id="CHEBI:30616"/>
    </ligand>
</feature>
<proteinExistence type="inferred from homology"/>
<keyword id="KW-0067">ATP-binding</keyword>
<keyword id="KW-0173">Coenzyme A biosynthesis</keyword>
<keyword id="KW-0963">Cytoplasm</keyword>
<keyword id="KW-0418">Kinase</keyword>
<keyword id="KW-0547">Nucleotide-binding</keyword>
<keyword id="KW-1185">Reference proteome</keyword>
<keyword id="KW-0808">Transferase</keyword>
<gene>
    <name evidence="1" type="primary">coaA</name>
    <name type="ordered locus">BBta_0140</name>
</gene>
<dbReference type="EC" id="2.7.1.33" evidence="1"/>
<dbReference type="EMBL" id="CP000494">
    <property type="protein sequence ID" value="ABQ32437.1"/>
    <property type="molecule type" value="Genomic_DNA"/>
</dbReference>
<dbReference type="RefSeq" id="WP_011942659.1">
    <property type="nucleotide sequence ID" value="NC_009485.1"/>
</dbReference>
<dbReference type="SMR" id="A5E8E3"/>
<dbReference type="STRING" id="288000.BBta_0140"/>
<dbReference type="KEGG" id="bbt:BBta_0140"/>
<dbReference type="eggNOG" id="COG1072">
    <property type="taxonomic scope" value="Bacteria"/>
</dbReference>
<dbReference type="HOGENOM" id="CLU_053818_1_1_5"/>
<dbReference type="OrthoDB" id="1550976at2"/>
<dbReference type="UniPathway" id="UPA00241">
    <property type="reaction ID" value="UER00352"/>
</dbReference>
<dbReference type="Proteomes" id="UP000000246">
    <property type="component" value="Chromosome"/>
</dbReference>
<dbReference type="GO" id="GO:0005737">
    <property type="term" value="C:cytoplasm"/>
    <property type="evidence" value="ECO:0007669"/>
    <property type="project" value="UniProtKB-SubCell"/>
</dbReference>
<dbReference type="GO" id="GO:0005524">
    <property type="term" value="F:ATP binding"/>
    <property type="evidence" value="ECO:0007669"/>
    <property type="project" value="UniProtKB-UniRule"/>
</dbReference>
<dbReference type="GO" id="GO:0004594">
    <property type="term" value="F:pantothenate kinase activity"/>
    <property type="evidence" value="ECO:0007669"/>
    <property type="project" value="UniProtKB-UniRule"/>
</dbReference>
<dbReference type="GO" id="GO:0015937">
    <property type="term" value="P:coenzyme A biosynthetic process"/>
    <property type="evidence" value="ECO:0007669"/>
    <property type="project" value="UniProtKB-UniRule"/>
</dbReference>
<dbReference type="CDD" id="cd02025">
    <property type="entry name" value="PanK"/>
    <property type="match status" value="1"/>
</dbReference>
<dbReference type="FunFam" id="3.40.50.300:FF:000242">
    <property type="entry name" value="Pantothenate kinase"/>
    <property type="match status" value="1"/>
</dbReference>
<dbReference type="Gene3D" id="3.40.50.300">
    <property type="entry name" value="P-loop containing nucleotide triphosphate hydrolases"/>
    <property type="match status" value="1"/>
</dbReference>
<dbReference type="HAMAP" id="MF_00215">
    <property type="entry name" value="Pantothen_kinase_1"/>
    <property type="match status" value="1"/>
</dbReference>
<dbReference type="InterPro" id="IPR027417">
    <property type="entry name" value="P-loop_NTPase"/>
</dbReference>
<dbReference type="InterPro" id="IPR004566">
    <property type="entry name" value="PanK"/>
</dbReference>
<dbReference type="InterPro" id="IPR006083">
    <property type="entry name" value="PRK/URK"/>
</dbReference>
<dbReference type="NCBIfam" id="TIGR00554">
    <property type="entry name" value="panK_bact"/>
    <property type="match status" value="1"/>
</dbReference>
<dbReference type="PANTHER" id="PTHR10285">
    <property type="entry name" value="URIDINE KINASE"/>
    <property type="match status" value="1"/>
</dbReference>
<dbReference type="Pfam" id="PF00485">
    <property type="entry name" value="PRK"/>
    <property type="match status" value="1"/>
</dbReference>
<dbReference type="PIRSF" id="PIRSF000545">
    <property type="entry name" value="Pantothenate_kin"/>
    <property type="match status" value="1"/>
</dbReference>
<dbReference type="SUPFAM" id="SSF52540">
    <property type="entry name" value="P-loop containing nucleoside triphosphate hydrolases"/>
    <property type="match status" value="1"/>
</dbReference>